<feature type="chain" id="PRO_0000209977" description="UPF0337 protein Atu4724">
    <location>
        <begin position="1"/>
        <end position="67"/>
    </location>
</feature>
<sequence>MDWNRVEGNWKQMKGKVKEQWGKLTDDDLDVINGKREQLEGKIQERYGYEKDRTKKDIDDWYGRQGW</sequence>
<name>Y4724_AGRFC</name>
<comment type="similarity">
    <text evidence="1">Belongs to the UPF0337 (CsbD) family.</text>
</comment>
<keyword id="KW-1185">Reference proteome</keyword>
<protein>
    <recommendedName>
        <fullName>UPF0337 protein Atu4724</fullName>
    </recommendedName>
</protein>
<reference key="1">
    <citation type="journal article" date="2001" name="Science">
        <title>The genome of the natural genetic engineer Agrobacterium tumefaciens C58.</title>
        <authorList>
            <person name="Wood D.W."/>
            <person name="Setubal J.C."/>
            <person name="Kaul R."/>
            <person name="Monks D.E."/>
            <person name="Kitajima J.P."/>
            <person name="Okura V.K."/>
            <person name="Zhou Y."/>
            <person name="Chen L."/>
            <person name="Wood G.E."/>
            <person name="Almeida N.F. Jr."/>
            <person name="Woo L."/>
            <person name="Chen Y."/>
            <person name="Paulsen I.T."/>
            <person name="Eisen J.A."/>
            <person name="Karp P.D."/>
            <person name="Bovee D. Sr."/>
            <person name="Chapman P."/>
            <person name="Clendenning J."/>
            <person name="Deatherage G."/>
            <person name="Gillet W."/>
            <person name="Grant C."/>
            <person name="Kutyavin T."/>
            <person name="Levy R."/>
            <person name="Li M.-J."/>
            <person name="McClelland E."/>
            <person name="Palmieri A."/>
            <person name="Raymond C."/>
            <person name="Rouse G."/>
            <person name="Saenphimmachak C."/>
            <person name="Wu Z."/>
            <person name="Romero P."/>
            <person name="Gordon D."/>
            <person name="Zhang S."/>
            <person name="Yoo H."/>
            <person name="Tao Y."/>
            <person name="Biddle P."/>
            <person name="Jung M."/>
            <person name="Krespan W."/>
            <person name="Perry M."/>
            <person name="Gordon-Kamm B."/>
            <person name="Liao L."/>
            <person name="Kim S."/>
            <person name="Hendrick C."/>
            <person name="Zhao Z.-Y."/>
            <person name="Dolan M."/>
            <person name="Chumley F."/>
            <person name="Tingey S.V."/>
            <person name="Tomb J.-F."/>
            <person name="Gordon M.P."/>
            <person name="Olson M.V."/>
            <person name="Nester E.W."/>
        </authorList>
    </citation>
    <scope>NUCLEOTIDE SEQUENCE [LARGE SCALE GENOMIC DNA]</scope>
    <source>
        <strain>C58 / ATCC 33970</strain>
    </source>
</reference>
<reference key="2">
    <citation type="journal article" date="2001" name="Science">
        <title>Genome sequence of the plant pathogen and biotechnology agent Agrobacterium tumefaciens C58.</title>
        <authorList>
            <person name="Goodner B."/>
            <person name="Hinkle G."/>
            <person name="Gattung S."/>
            <person name="Miller N."/>
            <person name="Blanchard M."/>
            <person name="Qurollo B."/>
            <person name="Goldman B.S."/>
            <person name="Cao Y."/>
            <person name="Askenazi M."/>
            <person name="Halling C."/>
            <person name="Mullin L."/>
            <person name="Houmiel K."/>
            <person name="Gordon J."/>
            <person name="Vaudin M."/>
            <person name="Iartchouk O."/>
            <person name="Epp A."/>
            <person name="Liu F."/>
            <person name="Wollam C."/>
            <person name="Allinger M."/>
            <person name="Doughty D."/>
            <person name="Scott C."/>
            <person name="Lappas C."/>
            <person name="Markelz B."/>
            <person name="Flanagan C."/>
            <person name="Crowell C."/>
            <person name="Gurson J."/>
            <person name="Lomo C."/>
            <person name="Sear C."/>
            <person name="Strub G."/>
            <person name="Cielo C."/>
            <person name="Slater S."/>
        </authorList>
    </citation>
    <scope>NUCLEOTIDE SEQUENCE [LARGE SCALE GENOMIC DNA]</scope>
    <source>
        <strain>C58 / ATCC 33970</strain>
    </source>
</reference>
<organism>
    <name type="scientific">Agrobacterium fabrum (strain C58 / ATCC 33970)</name>
    <name type="common">Agrobacterium tumefaciens (strain C58)</name>
    <dbReference type="NCBI Taxonomy" id="176299"/>
    <lineage>
        <taxon>Bacteria</taxon>
        <taxon>Pseudomonadati</taxon>
        <taxon>Pseudomonadota</taxon>
        <taxon>Alphaproteobacteria</taxon>
        <taxon>Hyphomicrobiales</taxon>
        <taxon>Rhizobiaceae</taxon>
        <taxon>Rhizobium/Agrobacterium group</taxon>
        <taxon>Agrobacterium</taxon>
        <taxon>Agrobacterium tumefaciens complex</taxon>
    </lineage>
</organism>
<proteinExistence type="inferred from homology"/>
<gene>
    <name type="ordered locus">Atu4724</name>
    <name type="ORF">AGR_L_317</name>
</gene>
<evidence type="ECO:0000305" key="1"/>
<dbReference type="EMBL" id="AE007870">
    <property type="protein sequence ID" value="AAK88726.2"/>
    <property type="molecule type" value="Genomic_DNA"/>
</dbReference>
<dbReference type="PIR" id="AH3137">
    <property type="entry name" value="AH3137"/>
</dbReference>
<dbReference type="PIR" id="D98150">
    <property type="entry name" value="D98150"/>
</dbReference>
<dbReference type="RefSeq" id="NP_355941.2">
    <property type="nucleotide sequence ID" value="NC_003063.2"/>
</dbReference>
<dbReference type="RefSeq" id="WP_010974103.1">
    <property type="nucleotide sequence ID" value="NC_003063.2"/>
</dbReference>
<dbReference type="SMR" id="Q8U6T2"/>
<dbReference type="STRING" id="176299.Atu4724"/>
<dbReference type="EnsemblBacteria" id="AAK88726">
    <property type="protein sequence ID" value="AAK88726"/>
    <property type="gene ID" value="Atu4724"/>
</dbReference>
<dbReference type="GeneID" id="1136598"/>
<dbReference type="KEGG" id="atu:Atu4724"/>
<dbReference type="PATRIC" id="fig|176299.10.peg.4530"/>
<dbReference type="eggNOG" id="COG3237">
    <property type="taxonomic scope" value="Bacteria"/>
</dbReference>
<dbReference type="HOGENOM" id="CLU_135567_4_1_5"/>
<dbReference type="OrthoDB" id="9796058at2"/>
<dbReference type="PhylomeDB" id="Q8U6T2"/>
<dbReference type="BioCyc" id="AGRO:ATU4724-MONOMER"/>
<dbReference type="Proteomes" id="UP000000813">
    <property type="component" value="Chromosome linear"/>
</dbReference>
<dbReference type="Gene3D" id="1.10.1470.10">
    <property type="entry name" value="YjbJ"/>
    <property type="match status" value="1"/>
</dbReference>
<dbReference type="InterPro" id="IPR008462">
    <property type="entry name" value="CsbD"/>
</dbReference>
<dbReference type="InterPro" id="IPR050423">
    <property type="entry name" value="UPF0337_stress_rsp"/>
</dbReference>
<dbReference type="InterPro" id="IPR026042">
    <property type="entry name" value="YjbJ"/>
</dbReference>
<dbReference type="InterPro" id="IPR036629">
    <property type="entry name" value="YjbJ_sf"/>
</dbReference>
<dbReference type="PANTHER" id="PTHR34977">
    <property type="entry name" value="UPF0337 PROTEIN YJBJ"/>
    <property type="match status" value="1"/>
</dbReference>
<dbReference type="PANTHER" id="PTHR34977:SF1">
    <property type="entry name" value="UPF0337 PROTEIN YJBJ"/>
    <property type="match status" value="1"/>
</dbReference>
<dbReference type="Pfam" id="PF05532">
    <property type="entry name" value="CsbD"/>
    <property type="match status" value="1"/>
</dbReference>
<dbReference type="PIRSF" id="PIRSF039008">
    <property type="entry name" value="YjbJ"/>
    <property type="match status" value="1"/>
</dbReference>
<dbReference type="SUPFAM" id="SSF69047">
    <property type="entry name" value="Hypothetical protein YjbJ"/>
    <property type="match status" value="1"/>
</dbReference>
<accession>Q8U6T2</accession>
<accession>Q7CVP6</accession>